<proteinExistence type="inferred from homology"/>
<reference key="1">
    <citation type="journal article" date="2010" name="Genome Biol. Evol.">
        <title>Continuing evolution of Burkholderia mallei through genome reduction and large-scale rearrangements.</title>
        <authorList>
            <person name="Losada L."/>
            <person name="Ronning C.M."/>
            <person name="DeShazer D."/>
            <person name="Woods D."/>
            <person name="Fedorova N."/>
            <person name="Kim H.S."/>
            <person name="Shabalina S.A."/>
            <person name="Pearson T.R."/>
            <person name="Brinkac L."/>
            <person name="Tan P."/>
            <person name="Nandi T."/>
            <person name="Crabtree J."/>
            <person name="Badger J."/>
            <person name="Beckstrom-Sternberg S."/>
            <person name="Saqib M."/>
            <person name="Schutzer S.E."/>
            <person name="Keim P."/>
            <person name="Nierman W.C."/>
        </authorList>
    </citation>
    <scope>NUCLEOTIDE SEQUENCE [LARGE SCALE GENOMIC DNA]</scope>
    <source>
        <strain>668</strain>
    </source>
</reference>
<protein>
    <recommendedName>
        <fullName evidence="1">Inner membrane-spanning protein YciB</fullName>
    </recommendedName>
</protein>
<gene>
    <name evidence="1" type="primary">yciB</name>
    <name type="ordered locus">BURPS668_2299</name>
</gene>
<feature type="chain" id="PRO_1000020997" description="Inner membrane-spanning protein YciB">
    <location>
        <begin position="1"/>
        <end position="176"/>
    </location>
</feature>
<feature type="transmembrane region" description="Helical" evidence="1">
    <location>
        <begin position="3"/>
        <end position="23"/>
    </location>
</feature>
<feature type="transmembrane region" description="Helical" evidence="1">
    <location>
        <begin position="49"/>
        <end position="69"/>
    </location>
</feature>
<feature type="transmembrane region" description="Helical" evidence="1">
    <location>
        <begin position="72"/>
        <end position="92"/>
    </location>
</feature>
<feature type="transmembrane region" description="Helical" evidence="1">
    <location>
        <begin position="118"/>
        <end position="138"/>
    </location>
</feature>
<feature type="transmembrane region" description="Helical" evidence="1">
    <location>
        <begin position="149"/>
        <end position="169"/>
    </location>
</feature>
<keyword id="KW-0997">Cell inner membrane</keyword>
<keyword id="KW-1003">Cell membrane</keyword>
<keyword id="KW-0472">Membrane</keyword>
<keyword id="KW-0812">Transmembrane</keyword>
<keyword id="KW-1133">Transmembrane helix</keyword>
<dbReference type="EMBL" id="CP000570">
    <property type="protein sequence ID" value="ABN84867.1"/>
    <property type="molecule type" value="Genomic_DNA"/>
</dbReference>
<dbReference type="RefSeq" id="WP_004192037.1">
    <property type="nucleotide sequence ID" value="NC_009074.1"/>
</dbReference>
<dbReference type="KEGG" id="bpd:BURPS668_2299"/>
<dbReference type="HOGENOM" id="CLU_089554_2_0_4"/>
<dbReference type="GO" id="GO:0005886">
    <property type="term" value="C:plasma membrane"/>
    <property type="evidence" value="ECO:0007669"/>
    <property type="project" value="UniProtKB-SubCell"/>
</dbReference>
<dbReference type="HAMAP" id="MF_00189">
    <property type="entry name" value="YciB"/>
    <property type="match status" value="1"/>
</dbReference>
<dbReference type="InterPro" id="IPR006008">
    <property type="entry name" value="YciB"/>
</dbReference>
<dbReference type="NCBIfam" id="TIGR00997">
    <property type="entry name" value="ispZ"/>
    <property type="match status" value="1"/>
</dbReference>
<dbReference type="NCBIfam" id="NF001325">
    <property type="entry name" value="PRK00259.1-3"/>
    <property type="match status" value="1"/>
</dbReference>
<dbReference type="PANTHER" id="PTHR36917:SF1">
    <property type="entry name" value="INNER MEMBRANE-SPANNING PROTEIN YCIB"/>
    <property type="match status" value="1"/>
</dbReference>
<dbReference type="PANTHER" id="PTHR36917">
    <property type="entry name" value="INTRACELLULAR SEPTATION PROTEIN A-RELATED"/>
    <property type="match status" value="1"/>
</dbReference>
<dbReference type="Pfam" id="PF04279">
    <property type="entry name" value="IspA"/>
    <property type="match status" value="1"/>
</dbReference>
<sequence length="176" mass="20017">MKFLFDLFPIILFFAAFKLWGIFTATAVAIAATLAQVAWVAFRHRKVDTMLWVSLGVIVVFGGATLVLHDEKFIQWKPTVLYWLFAVGLVAARYAFGKNLIEKMMGKQLTLPEPVWDKLNLAWAAFFAALGVTNLYVVRNFTESQWVNFKLFGTTGAIVVFVILQSLWLAKYLKEE</sequence>
<comment type="function">
    <text evidence="1">Plays a role in cell envelope biogenesis, maintenance of cell envelope integrity and membrane homeostasis.</text>
</comment>
<comment type="subcellular location">
    <subcellularLocation>
        <location evidence="1">Cell inner membrane</location>
        <topology evidence="1">Multi-pass membrane protein</topology>
    </subcellularLocation>
</comment>
<comment type="similarity">
    <text evidence="1">Belongs to the YciB family.</text>
</comment>
<organism>
    <name type="scientific">Burkholderia pseudomallei (strain 668)</name>
    <dbReference type="NCBI Taxonomy" id="320373"/>
    <lineage>
        <taxon>Bacteria</taxon>
        <taxon>Pseudomonadati</taxon>
        <taxon>Pseudomonadota</taxon>
        <taxon>Betaproteobacteria</taxon>
        <taxon>Burkholderiales</taxon>
        <taxon>Burkholderiaceae</taxon>
        <taxon>Burkholderia</taxon>
        <taxon>pseudomallei group</taxon>
    </lineage>
</organism>
<evidence type="ECO:0000255" key="1">
    <source>
        <dbReference type="HAMAP-Rule" id="MF_00189"/>
    </source>
</evidence>
<name>YCIB_BURP6</name>
<accession>A3NAG3</accession>